<reference key="1">
    <citation type="journal article" date="2005" name="Nat. Biotechnol.">
        <title>Complete genome sequence of the acetic acid bacterium Gluconobacter oxydans.</title>
        <authorList>
            <person name="Prust C."/>
            <person name="Hoffmeister M."/>
            <person name="Liesegang H."/>
            <person name="Wiezer A."/>
            <person name="Fricke W.F."/>
            <person name="Ehrenreich A."/>
            <person name="Gottschalk G."/>
            <person name="Deppenmeier U."/>
        </authorList>
    </citation>
    <scope>NUCLEOTIDE SEQUENCE [LARGE SCALE GENOMIC DNA]</scope>
    <source>
        <strain>621H</strain>
    </source>
</reference>
<organism>
    <name type="scientific">Gluconobacter oxydans (strain 621H)</name>
    <name type="common">Gluconobacter suboxydans</name>
    <dbReference type="NCBI Taxonomy" id="290633"/>
    <lineage>
        <taxon>Bacteria</taxon>
        <taxon>Pseudomonadati</taxon>
        <taxon>Pseudomonadota</taxon>
        <taxon>Alphaproteobacteria</taxon>
        <taxon>Acetobacterales</taxon>
        <taxon>Acetobacteraceae</taxon>
        <taxon>Gluconobacter</taxon>
    </lineage>
</organism>
<evidence type="ECO:0000255" key="1">
    <source>
        <dbReference type="HAMAP-Rule" id="MF_00815"/>
    </source>
</evidence>
<keyword id="KW-0066">ATP synthesis</keyword>
<keyword id="KW-0997">Cell inner membrane</keyword>
<keyword id="KW-1003">Cell membrane</keyword>
<keyword id="KW-0139">CF(1)</keyword>
<keyword id="KW-0375">Hydrogen ion transport</keyword>
<keyword id="KW-0406">Ion transport</keyword>
<keyword id="KW-0472">Membrane</keyword>
<keyword id="KW-1185">Reference proteome</keyword>
<keyword id="KW-0813">Transport</keyword>
<comment type="function">
    <text evidence="1">Produces ATP from ADP in the presence of a proton gradient across the membrane. The gamma chain is believed to be important in regulating ATPase activity and the flow of protons through the CF(0) complex.</text>
</comment>
<comment type="subunit">
    <text evidence="1">F-type ATPases have 2 components, CF(1) - the catalytic core - and CF(0) - the membrane proton channel. CF(1) has five subunits: alpha(3), beta(3), gamma(1), delta(1), epsilon(1). CF(0) has three main subunits: a, b and c.</text>
</comment>
<comment type="subcellular location">
    <subcellularLocation>
        <location evidence="1">Cell inner membrane</location>
        <topology evidence="1">Peripheral membrane protein</topology>
    </subcellularLocation>
</comment>
<comment type="similarity">
    <text evidence="1">Belongs to the ATPase gamma chain family.</text>
</comment>
<dbReference type="EMBL" id="CP000009">
    <property type="protein sequence ID" value="AAW61070.1"/>
    <property type="molecule type" value="Genomic_DNA"/>
</dbReference>
<dbReference type="RefSeq" id="WP_011252862.1">
    <property type="nucleotide sequence ID" value="NC_006677.1"/>
</dbReference>
<dbReference type="SMR" id="Q5FRC6"/>
<dbReference type="STRING" id="290633.GOX1312"/>
<dbReference type="KEGG" id="gox:GOX1312"/>
<dbReference type="eggNOG" id="COG0224">
    <property type="taxonomic scope" value="Bacteria"/>
</dbReference>
<dbReference type="HOGENOM" id="CLU_050669_0_1_5"/>
<dbReference type="Proteomes" id="UP000006375">
    <property type="component" value="Chromosome"/>
</dbReference>
<dbReference type="GO" id="GO:0005886">
    <property type="term" value="C:plasma membrane"/>
    <property type="evidence" value="ECO:0007669"/>
    <property type="project" value="UniProtKB-SubCell"/>
</dbReference>
<dbReference type="GO" id="GO:0045259">
    <property type="term" value="C:proton-transporting ATP synthase complex"/>
    <property type="evidence" value="ECO:0007669"/>
    <property type="project" value="UniProtKB-KW"/>
</dbReference>
<dbReference type="GO" id="GO:0005524">
    <property type="term" value="F:ATP binding"/>
    <property type="evidence" value="ECO:0007669"/>
    <property type="project" value="UniProtKB-UniRule"/>
</dbReference>
<dbReference type="GO" id="GO:0046933">
    <property type="term" value="F:proton-transporting ATP synthase activity, rotational mechanism"/>
    <property type="evidence" value="ECO:0007669"/>
    <property type="project" value="UniProtKB-UniRule"/>
</dbReference>
<dbReference type="GO" id="GO:0042777">
    <property type="term" value="P:proton motive force-driven plasma membrane ATP synthesis"/>
    <property type="evidence" value="ECO:0007669"/>
    <property type="project" value="UniProtKB-UniRule"/>
</dbReference>
<dbReference type="CDD" id="cd12151">
    <property type="entry name" value="F1-ATPase_gamma"/>
    <property type="match status" value="1"/>
</dbReference>
<dbReference type="Gene3D" id="3.40.1380.10">
    <property type="match status" value="1"/>
</dbReference>
<dbReference type="Gene3D" id="1.10.287.80">
    <property type="entry name" value="ATP synthase, gamma subunit, helix hairpin domain"/>
    <property type="match status" value="1"/>
</dbReference>
<dbReference type="HAMAP" id="MF_00815">
    <property type="entry name" value="ATP_synth_gamma_bact"/>
    <property type="match status" value="1"/>
</dbReference>
<dbReference type="InterPro" id="IPR035968">
    <property type="entry name" value="ATP_synth_F1_ATPase_gsu"/>
</dbReference>
<dbReference type="InterPro" id="IPR000131">
    <property type="entry name" value="ATP_synth_F1_gsu"/>
</dbReference>
<dbReference type="NCBIfam" id="TIGR01146">
    <property type="entry name" value="ATPsyn_F1gamma"/>
    <property type="match status" value="1"/>
</dbReference>
<dbReference type="NCBIfam" id="NF004146">
    <property type="entry name" value="PRK05621.1-4"/>
    <property type="match status" value="1"/>
</dbReference>
<dbReference type="PANTHER" id="PTHR11693">
    <property type="entry name" value="ATP SYNTHASE GAMMA CHAIN"/>
    <property type="match status" value="1"/>
</dbReference>
<dbReference type="PANTHER" id="PTHR11693:SF22">
    <property type="entry name" value="ATP SYNTHASE SUBUNIT GAMMA, MITOCHONDRIAL"/>
    <property type="match status" value="1"/>
</dbReference>
<dbReference type="Pfam" id="PF00231">
    <property type="entry name" value="ATP-synt"/>
    <property type="match status" value="1"/>
</dbReference>
<dbReference type="PIRSF" id="PIRSF039089">
    <property type="entry name" value="ATP_synthase_gamma"/>
    <property type="match status" value="1"/>
</dbReference>
<dbReference type="PRINTS" id="PR00126">
    <property type="entry name" value="ATPASEGAMMA"/>
</dbReference>
<dbReference type="SUPFAM" id="SSF52943">
    <property type="entry name" value="ATP synthase (F1-ATPase), gamma subunit"/>
    <property type="match status" value="1"/>
</dbReference>
<accession>Q5FRC6</accession>
<sequence>MASLKELRGRITGVKSTRKITNAMKMVAASKLRRAQMQAEAARPYADAMRRMMAELAMATRGEDAASLPRLLAGTGKDQTHLVVVLTSDRGLAGGFNANIVRSARQLVDTLVSEGKTVRILPVGRKGADILVRHYPEMITDRLAGSDGKDVGFDKATDIGSRIATMLDAGEIDRCTLVYNRFLNAMTQIPVQAPLVPLSVPENDNAAPDADTAQYEFEPDEATLLTQLLPRNLQVQIFSAMLESAAGEQGARMTAMDNASRNASKAIDRLSQKYNRTRQANITNDLIEIISGAEAV</sequence>
<protein>
    <recommendedName>
        <fullName evidence="1">ATP synthase gamma chain</fullName>
    </recommendedName>
    <alternativeName>
        <fullName evidence="1">ATP synthase F1 sector gamma subunit</fullName>
    </alternativeName>
    <alternativeName>
        <fullName evidence="1">F-ATPase gamma subunit</fullName>
    </alternativeName>
</protein>
<feature type="chain" id="PRO_0000073290" description="ATP synthase gamma chain">
    <location>
        <begin position="1"/>
        <end position="296"/>
    </location>
</feature>
<gene>
    <name evidence="1" type="primary">atpG</name>
    <name type="ordered locus">GOX1312</name>
</gene>
<name>ATPG_GLUOX</name>
<proteinExistence type="inferred from homology"/>